<accession>Q8EUS8</accession>
<reference key="1">
    <citation type="journal article" date="2002" name="Nucleic Acids Res.">
        <title>The complete genomic sequence of Mycoplasma penetrans, an intracellular bacterial pathogen in humans.</title>
        <authorList>
            <person name="Sasaki Y."/>
            <person name="Ishikawa J."/>
            <person name="Yamashita A."/>
            <person name="Oshima K."/>
            <person name="Kenri T."/>
            <person name="Furuya K."/>
            <person name="Yoshino C."/>
            <person name="Horino A."/>
            <person name="Shiba T."/>
            <person name="Sasaki T."/>
            <person name="Hattori M."/>
        </authorList>
    </citation>
    <scope>NUCLEOTIDE SEQUENCE [LARGE SCALE GENOMIC DNA]</scope>
    <source>
        <strain>HF-2</strain>
    </source>
</reference>
<proteinExistence type="inferred from homology"/>
<gene>
    <name evidence="1" type="primary">lysS</name>
    <name type="ordered locus">MYPE8420</name>
</gene>
<feature type="chain" id="PRO_0000152650" description="Lysine--tRNA ligase">
    <location>
        <begin position="1"/>
        <end position="489"/>
    </location>
</feature>
<feature type="binding site" evidence="1">
    <location>
        <position position="399"/>
    </location>
    <ligand>
        <name>Mg(2+)</name>
        <dbReference type="ChEBI" id="CHEBI:18420"/>
        <label>1</label>
    </ligand>
</feature>
<feature type="binding site" evidence="1">
    <location>
        <position position="406"/>
    </location>
    <ligand>
        <name>Mg(2+)</name>
        <dbReference type="ChEBI" id="CHEBI:18420"/>
        <label>1</label>
    </ligand>
</feature>
<feature type="binding site" evidence="1">
    <location>
        <position position="406"/>
    </location>
    <ligand>
        <name>Mg(2+)</name>
        <dbReference type="ChEBI" id="CHEBI:18420"/>
        <label>2</label>
    </ligand>
</feature>
<evidence type="ECO:0000255" key="1">
    <source>
        <dbReference type="HAMAP-Rule" id="MF_00252"/>
    </source>
</evidence>
<organism>
    <name type="scientific">Malacoplasma penetrans (strain HF-2)</name>
    <name type="common">Mycoplasma penetrans</name>
    <dbReference type="NCBI Taxonomy" id="272633"/>
    <lineage>
        <taxon>Bacteria</taxon>
        <taxon>Bacillati</taxon>
        <taxon>Mycoplasmatota</taxon>
        <taxon>Mycoplasmoidales</taxon>
        <taxon>Mycoplasmoidaceae</taxon>
        <taxon>Malacoplasma</taxon>
    </lineage>
</organism>
<dbReference type="EC" id="6.1.1.6" evidence="1"/>
<dbReference type="EMBL" id="BA000026">
    <property type="protein sequence ID" value="BAC44634.1"/>
    <property type="molecule type" value="Genomic_DNA"/>
</dbReference>
<dbReference type="RefSeq" id="WP_011077663.1">
    <property type="nucleotide sequence ID" value="NC_004432.1"/>
</dbReference>
<dbReference type="SMR" id="Q8EUS8"/>
<dbReference type="FunCoup" id="Q8EUS8">
    <property type="interactions" value="270"/>
</dbReference>
<dbReference type="STRING" id="272633.gene:10731964"/>
<dbReference type="KEGG" id="mpe:MYPE8420"/>
<dbReference type="eggNOG" id="COG1190">
    <property type="taxonomic scope" value="Bacteria"/>
</dbReference>
<dbReference type="HOGENOM" id="CLU_008255_6_0_14"/>
<dbReference type="InParanoid" id="Q8EUS8"/>
<dbReference type="Proteomes" id="UP000002522">
    <property type="component" value="Chromosome"/>
</dbReference>
<dbReference type="GO" id="GO:0005829">
    <property type="term" value="C:cytosol"/>
    <property type="evidence" value="ECO:0007669"/>
    <property type="project" value="TreeGrafter"/>
</dbReference>
<dbReference type="GO" id="GO:0005524">
    <property type="term" value="F:ATP binding"/>
    <property type="evidence" value="ECO:0007669"/>
    <property type="project" value="UniProtKB-UniRule"/>
</dbReference>
<dbReference type="GO" id="GO:0004824">
    <property type="term" value="F:lysine-tRNA ligase activity"/>
    <property type="evidence" value="ECO:0007669"/>
    <property type="project" value="UniProtKB-UniRule"/>
</dbReference>
<dbReference type="GO" id="GO:0000287">
    <property type="term" value="F:magnesium ion binding"/>
    <property type="evidence" value="ECO:0007669"/>
    <property type="project" value="UniProtKB-UniRule"/>
</dbReference>
<dbReference type="GO" id="GO:0000049">
    <property type="term" value="F:tRNA binding"/>
    <property type="evidence" value="ECO:0007669"/>
    <property type="project" value="TreeGrafter"/>
</dbReference>
<dbReference type="GO" id="GO:0006430">
    <property type="term" value="P:lysyl-tRNA aminoacylation"/>
    <property type="evidence" value="ECO:0007669"/>
    <property type="project" value="UniProtKB-UniRule"/>
</dbReference>
<dbReference type="CDD" id="cd00775">
    <property type="entry name" value="LysRS_core"/>
    <property type="match status" value="1"/>
</dbReference>
<dbReference type="CDD" id="cd04322">
    <property type="entry name" value="LysRS_N"/>
    <property type="match status" value="1"/>
</dbReference>
<dbReference type="Gene3D" id="3.30.930.10">
    <property type="entry name" value="Bira Bifunctional Protein, Domain 2"/>
    <property type="match status" value="1"/>
</dbReference>
<dbReference type="Gene3D" id="2.40.50.140">
    <property type="entry name" value="Nucleic acid-binding proteins"/>
    <property type="match status" value="1"/>
</dbReference>
<dbReference type="HAMAP" id="MF_00252">
    <property type="entry name" value="Lys_tRNA_synth_class2"/>
    <property type="match status" value="1"/>
</dbReference>
<dbReference type="InterPro" id="IPR004364">
    <property type="entry name" value="Aa-tRNA-synt_II"/>
</dbReference>
<dbReference type="InterPro" id="IPR006195">
    <property type="entry name" value="aa-tRNA-synth_II"/>
</dbReference>
<dbReference type="InterPro" id="IPR045864">
    <property type="entry name" value="aa-tRNA-synth_II/BPL/LPL"/>
</dbReference>
<dbReference type="InterPro" id="IPR002313">
    <property type="entry name" value="Lys-tRNA-ligase_II"/>
</dbReference>
<dbReference type="InterPro" id="IPR044136">
    <property type="entry name" value="Lys-tRNA-ligase_II_N"/>
</dbReference>
<dbReference type="InterPro" id="IPR018149">
    <property type="entry name" value="Lys-tRNA-synth_II_C"/>
</dbReference>
<dbReference type="InterPro" id="IPR012340">
    <property type="entry name" value="NA-bd_OB-fold"/>
</dbReference>
<dbReference type="InterPro" id="IPR004365">
    <property type="entry name" value="NA-bd_OB_tRNA"/>
</dbReference>
<dbReference type="NCBIfam" id="TIGR00499">
    <property type="entry name" value="lysS_bact"/>
    <property type="match status" value="1"/>
</dbReference>
<dbReference type="NCBIfam" id="NF001756">
    <property type="entry name" value="PRK00484.1"/>
    <property type="match status" value="1"/>
</dbReference>
<dbReference type="PANTHER" id="PTHR42918:SF15">
    <property type="entry name" value="LYSINE--TRNA LIGASE, CHLOROPLASTIC_MITOCHONDRIAL"/>
    <property type="match status" value="1"/>
</dbReference>
<dbReference type="PANTHER" id="PTHR42918">
    <property type="entry name" value="LYSYL-TRNA SYNTHETASE"/>
    <property type="match status" value="1"/>
</dbReference>
<dbReference type="Pfam" id="PF00152">
    <property type="entry name" value="tRNA-synt_2"/>
    <property type="match status" value="1"/>
</dbReference>
<dbReference type="Pfam" id="PF01336">
    <property type="entry name" value="tRNA_anti-codon"/>
    <property type="match status" value="1"/>
</dbReference>
<dbReference type="PRINTS" id="PR00982">
    <property type="entry name" value="TRNASYNTHLYS"/>
</dbReference>
<dbReference type="SUPFAM" id="SSF55681">
    <property type="entry name" value="Class II aaRS and biotin synthetases"/>
    <property type="match status" value="1"/>
</dbReference>
<dbReference type="SUPFAM" id="SSF50249">
    <property type="entry name" value="Nucleic acid-binding proteins"/>
    <property type="match status" value="1"/>
</dbReference>
<dbReference type="PROSITE" id="PS50862">
    <property type="entry name" value="AA_TRNA_LIGASE_II"/>
    <property type="match status" value="1"/>
</dbReference>
<sequence>MERKFNDQELIRREKLKNLQEANQDPYEIEKVSRTMTIGDFNSKFAKLKTHNTNNNIKLAGRVVALRQTFGVIRDFYGDTQFYLNKKKVSKSMLEYFNKVLDLGDIVEIFGSPFRTQKGELTLDVKKIKIVSKALKPLPEKWHGLEDEELRARHRYVDLIVNKDSMKVFVDRIRILKIIRQFMDSQNYLEVETPVLHPILGGANARPFITFHNTLERNFYLRIATELPLKKLIVGGFDKVYEIGRIFRNEGMDSTHNPEFTSMEVYAAYENMEYMMRLTENLFKYVAKSLKKPVVKMGENEIYLTQKFRRIHMVDFIKQETGVDFWEVKSNQEAQELAKKHNVKFEKHQSTLGHIINLFFEEFCEAKCIQPTFVYGHPIDVSPLSKKDYKNPGFTKRFELFINTKEYANAFAELNDPIDQYERFEAQVKEKSLGNDEAVEMDMDFIEALEYGLPPTAGLGVGIDRMIMLFTEKSSIRDVLLFPHMKDKK</sequence>
<comment type="catalytic activity">
    <reaction evidence="1">
        <text>tRNA(Lys) + L-lysine + ATP = L-lysyl-tRNA(Lys) + AMP + diphosphate</text>
        <dbReference type="Rhea" id="RHEA:20792"/>
        <dbReference type="Rhea" id="RHEA-COMP:9696"/>
        <dbReference type="Rhea" id="RHEA-COMP:9697"/>
        <dbReference type="ChEBI" id="CHEBI:30616"/>
        <dbReference type="ChEBI" id="CHEBI:32551"/>
        <dbReference type="ChEBI" id="CHEBI:33019"/>
        <dbReference type="ChEBI" id="CHEBI:78442"/>
        <dbReference type="ChEBI" id="CHEBI:78529"/>
        <dbReference type="ChEBI" id="CHEBI:456215"/>
        <dbReference type="EC" id="6.1.1.6"/>
    </reaction>
</comment>
<comment type="cofactor">
    <cofactor evidence="1">
        <name>Mg(2+)</name>
        <dbReference type="ChEBI" id="CHEBI:18420"/>
    </cofactor>
    <text evidence="1">Binds 3 Mg(2+) ions per subunit.</text>
</comment>
<comment type="subunit">
    <text evidence="1">Homodimer.</text>
</comment>
<comment type="subcellular location">
    <subcellularLocation>
        <location evidence="1">Cytoplasm</location>
    </subcellularLocation>
</comment>
<comment type="similarity">
    <text evidence="1">Belongs to the class-II aminoacyl-tRNA synthetase family.</text>
</comment>
<name>SYK_MALP2</name>
<keyword id="KW-0030">Aminoacyl-tRNA synthetase</keyword>
<keyword id="KW-0067">ATP-binding</keyword>
<keyword id="KW-0963">Cytoplasm</keyword>
<keyword id="KW-0436">Ligase</keyword>
<keyword id="KW-0460">Magnesium</keyword>
<keyword id="KW-0479">Metal-binding</keyword>
<keyword id="KW-0547">Nucleotide-binding</keyword>
<keyword id="KW-0648">Protein biosynthesis</keyword>
<keyword id="KW-1185">Reference proteome</keyword>
<protein>
    <recommendedName>
        <fullName evidence="1">Lysine--tRNA ligase</fullName>
        <ecNumber evidence="1">6.1.1.6</ecNumber>
    </recommendedName>
    <alternativeName>
        <fullName evidence="1">Lysyl-tRNA synthetase</fullName>
        <shortName evidence="1">LysRS</shortName>
    </alternativeName>
</protein>